<accession>B1NKR6</accession>
<name>VP6_ROTAD</name>
<sequence>MEVLYSLSKTLKDARDKIVEGTLYSNVSDLIQQFNQMIVTMNGNNFQTGGIGNLPVRNWTFDFGLLGTTLLNLDANYVENARTTIEYFIDFIDNVCMDEMARESQRNGVAPQSEALRKLAGIKFKRINFDNSSEYIENWNLQNRRQRTGFVFHKPNIFPYSASFTLNRSQPMHDNLMGTMWLNAGSEIQVAGFDYSCAINAPANIQQFEHIVQLRRALTTATITLLPDAERFSFPRVINSADGATTWFFNPVILRPNNVEVEFLLNGQIINTYQARFGTIIARNFDTIRLLFQLMRPPNMTPAVNALFPQAQPFQHHATVGLTLRIESAVCESVLADANETLLANVTAVRQEYAIPVGPVFPPGMNWTELITNYSPSREDNLQRVFTVASIRSMLIK</sequence>
<organismHost>
    <name type="scientific">Homo sapiens</name>
    <name type="common">Human</name>
    <dbReference type="NCBI Taxonomy" id="9606"/>
</organismHost>
<feature type="chain" id="PRO_0000368180" description="Intermediate capsid protein VP6">
    <location>
        <begin position="1"/>
        <end position="397"/>
    </location>
</feature>
<feature type="region of interest" description="Interaction with the inner capsid protein VP2" evidence="1">
    <location>
        <begin position="62"/>
        <end position="73"/>
    </location>
</feature>
<feature type="binding site" evidence="1">
    <location>
        <position position="153"/>
    </location>
    <ligand>
        <name>Zn(2+)</name>
        <dbReference type="ChEBI" id="CHEBI:29105"/>
        <note>ligand shared between all trimeric partners</note>
    </ligand>
</feature>
<feature type="binding site" evidence="1">
    <location>
        <position position="266"/>
    </location>
    <ligand>
        <name>Ca(2+)</name>
        <dbReference type="ChEBI" id="CHEBI:29108"/>
    </ligand>
</feature>
<feature type="binding site" evidence="1">
    <location>
        <position position="286"/>
    </location>
    <ligand>
        <name>Ca(2+)</name>
        <dbReference type="ChEBI" id="CHEBI:29108"/>
    </ligand>
</feature>
<reference key="1">
    <citation type="journal article" date="2008" name="J. Virol.">
        <title>Full genome-based classification of rotaviruses reveals a common origin between human Wa-Like and porcine rotavirus strains and human DS-1-like and bovine rotavirus strains.</title>
        <authorList>
            <person name="Matthijnssens J."/>
            <person name="Ciarlet M."/>
            <person name="Heiman E.M."/>
            <person name="Arijs I."/>
            <person name="Delbeke T."/>
            <person name="McDonald S.M."/>
            <person name="Palombo E.A."/>
            <person name="Iturriza-Gomara M."/>
            <person name="Maes P."/>
            <person name="Patton J.T."/>
            <person name="Rahman M."/>
            <person name="Van Ranst M."/>
        </authorList>
    </citation>
    <scope>NUCLEOTIDE SEQUENCE [GENOMIC RNA]</scope>
</reference>
<evidence type="ECO:0000255" key="1">
    <source>
        <dbReference type="HAMAP-Rule" id="MF_04129"/>
    </source>
</evidence>
<proteinExistence type="inferred from homology"/>
<keyword id="KW-0106">Calcium</keyword>
<keyword id="KW-0167">Capsid protein</keyword>
<keyword id="KW-1154">Intermediate capsid protein</keyword>
<keyword id="KW-0479">Metal-binding</keyword>
<keyword id="KW-1185">Reference proteome</keyword>
<keyword id="KW-0832">Ubl conjugation</keyword>
<keyword id="KW-0946">Virion</keyword>
<keyword id="KW-0862">Zinc</keyword>
<organism>
    <name type="scientific">Rotavirus A (strain RVA/Human/United States/D/1974/G1P1A[8])</name>
    <name type="common">RV-A</name>
    <dbReference type="NCBI Taxonomy" id="578831"/>
    <lineage>
        <taxon>Viruses</taxon>
        <taxon>Riboviria</taxon>
        <taxon>Orthornavirae</taxon>
        <taxon>Duplornaviricota</taxon>
        <taxon>Resentoviricetes</taxon>
        <taxon>Reovirales</taxon>
        <taxon>Sedoreoviridae</taxon>
        <taxon>Rotavirus</taxon>
        <taxon>Rotavirus A</taxon>
    </lineage>
</organism>
<protein>
    <recommendedName>
        <fullName evidence="1">Intermediate capsid protein VP6</fullName>
    </recommendedName>
</protein>
<dbReference type="EMBL" id="EF583024">
    <property type="protein sequence ID" value="ABU87833.1"/>
    <property type="molecule type" value="Genomic_RNA"/>
</dbReference>
<dbReference type="SMR" id="B1NKR6"/>
<dbReference type="Proteomes" id="UP000006368">
    <property type="component" value="Genome"/>
</dbReference>
<dbReference type="GO" id="GO:0019031">
    <property type="term" value="C:viral envelope"/>
    <property type="evidence" value="ECO:0007669"/>
    <property type="project" value="UniProtKB-UniRule"/>
</dbReference>
<dbReference type="GO" id="GO:0039626">
    <property type="term" value="C:viral intermediate capsid"/>
    <property type="evidence" value="ECO:0007669"/>
    <property type="project" value="UniProtKB-UniRule"/>
</dbReference>
<dbReference type="GO" id="GO:0046789">
    <property type="term" value="F:host cell surface receptor binding"/>
    <property type="evidence" value="ECO:0007669"/>
    <property type="project" value="UniProtKB-UniRule"/>
</dbReference>
<dbReference type="GO" id="GO:0046872">
    <property type="term" value="F:metal ion binding"/>
    <property type="evidence" value="ECO:0007669"/>
    <property type="project" value="UniProtKB-UniRule"/>
</dbReference>
<dbReference type="GO" id="GO:0005198">
    <property type="term" value="F:structural molecule activity"/>
    <property type="evidence" value="ECO:0007669"/>
    <property type="project" value="UniProtKB-UniRule"/>
</dbReference>
<dbReference type="GO" id="GO:0019064">
    <property type="term" value="P:fusion of virus membrane with host plasma membrane"/>
    <property type="evidence" value="ECO:0007669"/>
    <property type="project" value="UniProtKB-UniRule"/>
</dbReference>
<dbReference type="FunFam" id="2.60.120.170:FF:000001">
    <property type="entry name" value="Intermediate capsid protein VP6"/>
    <property type="match status" value="1"/>
</dbReference>
<dbReference type="Gene3D" id="2.60.120.170">
    <property type="match status" value="1"/>
</dbReference>
<dbReference type="Gene3D" id="1.10.1350.10">
    <property type="entry name" value="Viral capsid alpha domain"/>
    <property type="match status" value="1"/>
</dbReference>
<dbReference type="HAMAP" id="MF_04126">
    <property type="entry name" value="Rota_VP6"/>
    <property type="match status" value="1"/>
</dbReference>
<dbReference type="HAMAP" id="MF_04129">
    <property type="entry name" value="Rota_VP6_A"/>
    <property type="match status" value="1"/>
</dbReference>
<dbReference type="InterPro" id="IPR008980">
    <property type="entry name" value="Capsid_hemagglutn"/>
</dbReference>
<dbReference type="InterPro" id="IPR001385">
    <property type="entry name" value="Rotavirus_A/C_VP6"/>
</dbReference>
<dbReference type="InterPro" id="IPR008935">
    <property type="entry name" value="Virus_capsid_a-hlx_vir"/>
</dbReference>
<dbReference type="Pfam" id="PF00980">
    <property type="entry name" value="Rota_Capsid_VP6"/>
    <property type="match status" value="1"/>
</dbReference>
<dbReference type="SUPFAM" id="SSF48345">
    <property type="entry name" value="A virus capsid protein alpha-helical domain"/>
    <property type="match status" value="1"/>
</dbReference>
<dbReference type="SUPFAM" id="SSF49818">
    <property type="entry name" value="Viral protein domain"/>
    <property type="match status" value="1"/>
</dbReference>
<comment type="function">
    <text evidence="1">Intermediate capsid protein that self assembles to form an icosahedral capsid with a T=13 symmetry, which consists of 230 trimers of VP6, with channels at each of its five-fold vertices. This capsid constitutes the middle concentric layer of the viral mature particle. The innermost VP2 capsid and the intermediate VP6 capsid remain intact following cell entry to protect the dsRNA from degradation and to prevent unfavorable antiviral responses in the host cell during all the replication cycle of the virus. Nascent transcripts are transcribed within the structural confines of this double-layered particle (DLP) and are extruded through the channels at the five-fold axes. VP6 is required for the transcription activity of the DLP.</text>
</comment>
<comment type="subunit">
    <text evidence="1">Homotrimer. Interacts with the inner capsid protein VP2. Interacts with the outer capsid glycoprotein VP7. Interacts with the outer capsid protein VP5*.</text>
</comment>
<comment type="subcellular location">
    <subcellularLocation>
        <location evidence="1">Virion</location>
    </subcellularLocation>
    <text evidence="1">Component of the intermediate capsid. Also found in spherical cytoplasmic structures, called virus factories, that appear early after infection and are the site of viral replication and packaging.</text>
</comment>
<comment type="PTM">
    <text evidence="1">The N-terminus is blocked.</text>
</comment>
<comment type="PTM">
    <text evidence="1">Sumoylated with SUMO1 and SUMO2. Sumoylation of viral proteins seems to have a positive role on viral replication.</text>
</comment>
<comment type="miscellaneous">
    <text evidence="1">The VP6 trimer contains a zinc ion located at the center of the molecule. The zinc ion is not essential for either trimerization or transcription activity of the DLP. Zinc-depleted VP6 has an increased sensitivity to proteases.</text>
</comment>
<comment type="similarity">
    <text evidence="1">Belongs to the rotavirus VP6 family.</text>
</comment>